<gene>
    <name evidence="1" type="primary">engB</name>
    <name type="ordered locus">Pcar_2742</name>
</gene>
<evidence type="ECO:0000255" key="1">
    <source>
        <dbReference type="HAMAP-Rule" id="MF_00321"/>
    </source>
</evidence>
<reference key="1">
    <citation type="submission" date="2005-10" db="EMBL/GenBank/DDBJ databases">
        <title>Complete sequence of Pelobacter carbinolicus DSM 2380.</title>
        <authorList>
            <person name="Copeland A."/>
            <person name="Lucas S."/>
            <person name="Lapidus A."/>
            <person name="Barry K."/>
            <person name="Detter J.C."/>
            <person name="Glavina T."/>
            <person name="Hammon N."/>
            <person name="Israni S."/>
            <person name="Pitluck S."/>
            <person name="Chertkov O."/>
            <person name="Schmutz J."/>
            <person name="Larimer F."/>
            <person name="Land M."/>
            <person name="Kyrpides N."/>
            <person name="Ivanova N."/>
            <person name="Richardson P."/>
        </authorList>
    </citation>
    <scope>NUCLEOTIDE SEQUENCE [LARGE SCALE GENOMIC DNA]</scope>
    <source>
        <strain>DSM 2380 / NBRC 103641 / GraBd1</strain>
    </source>
</reference>
<comment type="function">
    <text evidence="1">Necessary for normal cell division and for the maintenance of normal septation.</text>
</comment>
<comment type="cofactor">
    <cofactor evidence="1">
        <name>Mg(2+)</name>
        <dbReference type="ChEBI" id="CHEBI:18420"/>
    </cofactor>
</comment>
<comment type="similarity">
    <text evidence="1">Belongs to the TRAFAC class TrmE-Era-EngA-EngB-Septin-like GTPase superfamily. EngB GTPase family.</text>
</comment>
<protein>
    <recommendedName>
        <fullName evidence="1">Probable GTP-binding protein EngB</fullName>
    </recommendedName>
</protein>
<proteinExistence type="inferred from homology"/>
<name>ENGB_SYNC1</name>
<keyword id="KW-0131">Cell cycle</keyword>
<keyword id="KW-0132">Cell division</keyword>
<keyword id="KW-0342">GTP-binding</keyword>
<keyword id="KW-0460">Magnesium</keyword>
<keyword id="KW-0479">Metal-binding</keyword>
<keyword id="KW-0547">Nucleotide-binding</keyword>
<keyword id="KW-1185">Reference proteome</keyword>
<keyword id="KW-0717">Septation</keyword>
<organism>
    <name type="scientific">Syntrophotalea carbinolica (strain DSM 2380 / NBRC 103641 / GraBd1)</name>
    <name type="common">Pelobacter carbinolicus</name>
    <dbReference type="NCBI Taxonomy" id="338963"/>
    <lineage>
        <taxon>Bacteria</taxon>
        <taxon>Pseudomonadati</taxon>
        <taxon>Thermodesulfobacteriota</taxon>
        <taxon>Desulfuromonadia</taxon>
        <taxon>Desulfuromonadales</taxon>
        <taxon>Syntrophotaleaceae</taxon>
        <taxon>Syntrophotalea</taxon>
    </lineage>
</organism>
<feature type="chain" id="PRO_0000266911" description="Probable GTP-binding protein EngB">
    <location>
        <begin position="1"/>
        <end position="207"/>
    </location>
</feature>
<feature type="domain" description="EngB-type G" evidence="1">
    <location>
        <begin position="22"/>
        <end position="194"/>
    </location>
</feature>
<feature type="binding site" evidence="1">
    <location>
        <begin position="30"/>
        <end position="37"/>
    </location>
    <ligand>
        <name>GTP</name>
        <dbReference type="ChEBI" id="CHEBI:37565"/>
    </ligand>
</feature>
<feature type="binding site" evidence="1">
    <location>
        <position position="37"/>
    </location>
    <ligand>
        <name>Mg(2+)</name>
        <dbReference type="ChEBI" id="CHEBI:18420"/>
    </ligand>
</feature>
<feature type="binding site" evidence="1">
    <location>
        <begin position="57"/>
        <end position="61"/>
    </location>
    <ligand>
        <name>GTP</name>
        <dbReference type="ChEBI" id="CHEBI:37565"/>
    </ligand>
</feature>
<feature type="binding site" evidence="1">
    <location>
        <position position="59"/>
    </location>
    <ligand>
        <name>Mg(2+)</name>
        <dbReference type="ChEBI" id="CHEBI:18420"/>
    </ligand>
</feature>
<feature type="binding site" evidence="1">
    <location>
        <begin position="75"/>
        <end position="78"/>
    </location>
    <ligand>
        <name>GTP</name>
        <dbReference type="ChEBI" id="CHEBI:37565"/>
    </ligand>
</feature>
<feature type="binding site" evidence="1">
    <location>
        <begin position="142"/>
        <end position="145"/>
    </location>
    <ligand>
        <name>GTP</name>
        <dbReference type="ChEBI" id="CHEBI:37565"/>
    </ligand>
</feature>
<feature type="binding site" evidence="1">
    <location>
        <begin position="173"/>
        <end position="175"/>
    </location>
    <ligand>
        <name>GTP</name>
        <dbReference type="ChEBI" id="CHEBI:37565"/>
    </ligand>
</feature>
<accession>Q3A0Y0</accession>
<sequence length="207" mass="23394">MQIKSAEFIKSAAKPVGYPPGDLPEVAFAGRSNVGKSSLINVLVNRRGLVRTSSTPGRTQLLNFFEVNQHFMLVDLPGFGFAKVPVSVKKAWGRMTRTYLEERTNLKAVVLLFDIRREPRDEELQLLDWLEELNIPTIPVITKVDKVTKNRRRAQIRPILEATGLPQEAFSFFSALTREGREDILQRLDVALSDVEDEFGIDVPESE</sequence>
<dbReference type="EMBL" id="CP000142">
    <property type="protein sequence ID" value="ABA89977.2"/>
    <property type="molecule type" value="Genomic_DNA"/>
</dbReference>
<dbReference type="SMR" id="Q3A0Y0"/>
<dbReference type="STRING" id="338963.Pcar_2742"/>
<dbReference type="KEGG" id="pca:Pcar_2742"/>
<dbReference type="eggNOG" id="COG0218">
    <property type="taxonomic scope" value="Bacteria"/>
</dbReference>
<dbReference type="HOGENOM" id="CLU_033732_3_0_7"/>
<dbReference type="OrthoDB" id="9804921at2"/>
<dbReference type="Proteomes" id="UP000002534">
    <property type="component" value="Chromosome"/>
</dbReference>
<dbReference type="GO" id="GO:0005829">
    <property type="term" value="C:cytosol"/>
    <property type="evidence" value="ECO:0007669"/>
    <property type="project" value="TreeGrafter"/>
</dbReference>
<dbReference type="GO" id="GO:0005525">
    <property type="term" value="F:GTP binding"/>
    <property type="evidence" value="ECO:0007669"/>
    <property type="project" value="UniProtKB-UniRule"/>
</dbReference>
<dbReference type="GO" id="GO:0046872">
    <property type="term" value="F:metal ion binding"/>
    <property type="evidence" value="ECO:0007669"/>
    <property type="project" value="UniProtKB-KW"/>
</dbReference>
<dbReference type="GO" id="GO:0000917">
    <property type="term" value="P:division septum assembly"/>
    <property type="evidence" value="ECO:0007669"/>
    <property type="project" value="UniProtKB-KW"/>
</dbReference>
<dbReference type="CDD" id="cd01876">
    <property type="entry name" value="YihA_EngB"/>
    <property type="match status" value="1"/>
</dbReference>
<dbReference type="FunFam" id="3.40.50.300:FF:000098">
    <property type="entry name" value="Probable GTP-binding protein EngB"/>
    <property type="match status" value="1"/>
</dbReference>
<dbReference type="Gene3D" id="3.40.50.300">
    <property type="entry name" value="P-loop containing nucleotide triphosphate hydrolases"/>
    <property type="match status" value="1"/>
</dbReference>
<dbReference type="HAMAP" id="MF_00321">
    <property type="entry name" value="GTPase_EngB"/>
    <property type="match status" value="1"/>
</dbReference>
<dbReference type="InterPro" id="IPR030393">
    <property type="entry name" value="G_ENGB_dom"/>
</dbReference>
<dbReference type="InterPro" id="IPR006073">
    <property type="entry name" value="GTP-bd"/>
</dbReference>
<dbReference type="InterPro" id="IPR019987">
    <property type="entry name" value="GTP-bd_ribosome_bio_YsxC"/>
</dbReference>
<dbReference type="InterPro" id="IPR027417">
    <property type="entry name" value="P-loop_NTPase"/>
</dbReference>
<dbReference type="NCBIfam" id="TIGR03598">
    <property type="entry name" value="GTPase_YsxC"/>
    <property type="match status" value="1"/>
</dbReference>
<dbReference type="PANTHER" id="PTHR11649:SF13">
    <property type="entry name" value="ENGB-TYPE G DOMAIN-CONTAINING PROTEIN"/>
    <property type="match status" value="1"/>
</dbReference>
<dbReference type="PANTHER" id="PTHR11649">
    <property type="entry name" value="MSS1/TRME-RELATED GTP-BINDING PROTEIN"/>
    <property type="match status" value="1"/>
</dbReference>
<dbReference type="Pfam" id="PF01926">
    <property type="entry name" value="MMR_HSR1"/>
    <property type="match status" value="1"/>
</dbReference>
<dbReference type="SUPFAM" id="SSF52540">
    <property type="entry name" value="P-loop containing nucleoside triphosphate hydrolases"/>
    <property type="match status" value="1"/>
</dbReference>
<dbReference type="PROSITE" id="PS51706">
    <property type="entry name" value="G_ENGB"/>
    <property type="match status" value="1"/>
</dbReference>